<reference key="1">
    <citation type="journal article" date="2020" name="Front. Microbiol.">
        <title>Identification of Two Depolymerases From Phage IME205 and Their Antivirulent Functions on K47 Capsule of Klebsiella pneumoniae.</title>
        <authorList>
            <person name="Liu Y."/>
            <person name="Leung S.S.Y."/>
            <person name="Huang Y."/>
            <person name="Guo Y."/>
            <person name="Jiang N."/>
            <person name="Li P."/>
            <person name="Chen J."/>
            <person name="Wang R."/>
            <person name="Bai C."/>
            <person name="Mi Z."/>
            <person name="Gao Z."/>
        </authorList>
    </citation>
    <scope>NUCLEOTIDE SEQUENCE [LARGE SCALE GENOMIC DNA]</scope>
    <scope>FUNCTION</scope>
    <scope>BIOPHYSICOCHEMICAL PROPERTIES</scope>
</reference>
<reference key="2">
    <citation type="journal article" date="2019" name="Front. Microbiol.">
        <title>Modeling the Architecture of Depolymerase-Containing Receptor Binding Proteins in Klebsiella Phages.</title>
        <authorList>
            <person name="Latka A."/>
            <person name="Leiman P.G."/>
            <person name="Drulis-Kawa Z."/>
            <person name="Briers Y."/>
        </authorList>
    </citation>
    <scope>REVIEW</scope>
</reference>
<name>DPOL2_BPKIM</name>
<protein>
    <recommendedName>
        <fullName evidence="4">Depolymerase 1, capsule K47-specific</fullName>
    </recommendedName>
    <alternativeName>
        <fullName evidence="3">Dpo43</fullName>
    </alternativeName>
    <alternativeName>
        <fullName evidence="4">Gene product 43</fullName>
        <shortName evidence="4">gp43</shortName>
    </alternativeName>
    <alternativeName>
        <fullName evidence="4">Probable tail spike protein</fullName>
    </alternativeName>
</protein>
<organismHost>
    <name type="scientific">Klebsiella pneumoniae</name>
    <dbReference type="NCBI Taxonomy" id="573"/>
</organismHost>
<proteinExistence type="evidence at protein level"/>
<accession>A0A0U3C9T3</accession>
<sequence length="641" mass="67885">MLNNLNQPKGSTIGVLKDGRTIQQAIDGLENPVHYVKDVSITPSALLAVAVEAARLGRTVEFGPGHYTNQGQPFEVDFPLNLDVPVGTFLDFPIIIRGKTVKTVRSVATNLTAAQCPAGTTVIAGDFSAFPVGSVVGVKLGDNTNGSASYNNEAGWDFTTVAAASNTSITLSTGLRWAFDKPEVFTPEYAVRYSGQLSRSSYFIPGDYTSGLNVGDIIRVENIDGTDGVHGNKEYFEMLKVSSIDSSGITVETRLRYTHVNPWIVKTGLVKGSSVTGGGRLKRLEVRGVDTPKVNNVDVDRLIVGLCYNIDVGEITSRGVGEPSSVNFTFCFGRGFLYNVRASGSVSTTDNSALKLMSCPGLIINNCSPHNSTSTGSQGDYGFYVDAYYSPYWCWNDGMSINGIVTETPRSAVTRALWLFGLRGCSVSNLSGAQVFLQGCAKSVFSNIVTPDNLLELRDLSGCIVSGMANNALVLGCWNSTFDLTLFGIGSGSNLNIALRAGAGVTHPETGVPTTLGKNNTFNVKSFSQSSLAVTLSIAQQERPIFGAGCVDVDSANKSVALGSNVIVPTMLPLALTKGIDSGSGWVGGRTKGGIWFDGNYRDAAVRWNGQYVWVADNGSLKAAPTKPDSDSPSNGVVIGP</sequence>
<keyword id="KW-1238">Degradation of host capsule during virus entry</keyword>
<keyword id="KW-1235">Degradation of host cell envelope components during virus entry</keyword>
<keyword id="KW-0945">Host-virus interaction</keyword>
<keyword id="KW-1185">Reference proteome</keyword>
<keyword id="KW-1233">Viral attachment to host adhesion receptor</keyword>
<keyword id="KW-1161">Viral attachment to host cell</keyword>
<keyword id="KW-1227">Viral tail protein</keyword>
<keyword id="KW-0946">Virion</keyword>
<keyword id="KW-1160">Virus entry into host cell</keyword>
<evidence type="ECO:0000250" key="1">
    <source>
        <dbReference type="UniProtKB" id="D1L2X1"/>
    </source>
</evidence>
<evidence type="ECO:0000269" key="2">
    <source>
    </source>
</evidence>
<evidence type="ECO:0000303" key="3">
    <source>
    </source>
</evidence>
<evidence type="ECO:0000305" key="4"/>
<evidence type="ECO:0000305" key="5">
    <source>
    </source>
</evidence>
<dbReference type="EMBL" id="KU183006">
    <property type="protein sequence ID" value="ALT58498.1"/>
    <property type="molecule type" value="Genomic_DNA"/>
</dbReference>
<dbReference type="RefSeq" id="YP_009785900.1">
    <property type="nucleotide sequence ID" value="NC_047761.1"/>
</dbReference>
<dbReference type="SMR" id="A0A0U3C9T3"/>
<dbReference type="GeneID" id="54975965"/>
<dbReference type="Proteomes" id="UP000221941">
    <property type="component" value="Genome"/>
</dbReference>
<dbReference type="GO" id="GO:0098015">
    <property type="term" value="C:virus tail"/>
    <property type="evidence" value="ECO:0007669"/>
    <property type="project" value="UniProtKB-KW"/>
</dbReference>
<dbReference type="GO" id="GO:0098671">
    <property type="term" value="P:adhesion receptor-mediated virion attachment to host cell"/>
    <property type="evidence" value="ECO:0007669"/>
    <property type="project" value="UniProtKB-KW"/>
</dbReference>
<dbReference type="GO" id="GO:0098994">
    <property type="term" value="P:symbiont entry into host cell via disruption of host cell envelope"/>
    <property type="evidence" value="ECO:0007669"/>
    <property type="project" value="UniProtKB-KW"/>
</dbReference>
<dbReference type="GO" id="GO:0098996">
    <property type="term" value="P:symbiont entry into host cell via disruption of host cell glycocalyx"/>
    <property type="evidence" value="ECO:0000314"/>
    <property type="project" value="UniProtKB"/>
</dbReference>
<comment type="function">
    <text evidence="2 5">Functions as a receptor binding protein (RBP) and probably mediates the attachment to the host capsular exopolysaccharides (Probable). Displays a depolymerase activity that specifically degrades some K47-type polysaccharides of Klebsiella pneumoniae capsule, which allows the phage to reach the host cell membrane and bind the entry receptor (PubMed:32117192).</text>
</comment>
<comment type="biophysicochemical properties">
    <phDependence>
        <text evidence="2">Optimum pH is 5-8.</text>
    </phDependence>
    <temperatureDependence>
        <text evidence="2">Optimum temperature is 20-70 degrees Celsius.</text>
    </temperatureDependence>
</comment>
<comment type="subunit">
    <text evidence="1">Homotrimer. Interacts (via N-terminus) with depolymerase 1 (via N-terminus); this interaction probably gives rise to a branched tailspike.</text>
</comment>
<comment type="subcellular location">
    <subcellularLocation>
        <location evidence="1">Virion</location>
    </subcellularLocation>
    <text evidence="1">Tail appendage. Depolymerase 1 is connected to the phage tail via an N-terminal anchor domain, while depolymerase 2 is attached to depolymerase 1.</text>
</comment>
<comment type="similarity">
    <text evidence="4">In the N-terminal section; belongs to the Przondovirus depolymerase 2 family.</text>
</comment>
<feature type="chain" id="PRO_0000458718" description="Depolymerase 1, capsule K47-specific">
    <location>
        <begin position="1"/>
        <end position="641"/>
    </location>
</feature>
<organism>
    <name type="scientific">Klebsiella phage vB_KpnP_IME205</name>
    <name type="common">Bacteriophage vB_KpnP_IME205</name>
    <dbReference type="NCBI Taxonomy" id="1770232"/>
    <lineage>
        <taxon>Viruses</taxon>
        <taxon>Duplodnaviria</taxon>
        <taxon>Heunggongvirae</taxon>
        <taxon>Uroviricota</taxon>
        <taxon>Caudoviricetes</taxon>
        <taxon>Autographiviridae</taxon>
        <taxon>Studiervirinae</taxon>
        <taxon>Przondovirus</taxon>
        <taxon>Przondovirus IME205</taxon>
    </lineage>
</organism>